<name>B2KA3_SICCD</name>
<protein>
    <recommendedName>
        <fullName evidence="6">Dermonecrotic toxin SdSicTox-betaIIB1aiii</fullName>
        <ecNumber evidence="4">4.6.1.-</ecNumber>
    </recommendedName>
    <alternativeName>
        <fullName>Phospholipase D</fullName>
        <shortName>PLD</shortName>
    </alternativeName>
    <alternativeName>
        <fullName>Sphingomyelin phosphodiesterase D</fullName>
        <shortName>SMD</shortName>
        <shortName>SMase D</shortName>
        <shortName>Sphingomyelinase D</shortName>
    </alternativeName>
</protein>
<comment type="function">
    <text evidence="1 3">Dermonecrotic toxins cleave the phosphodiester linkage between the phosphate and headgroup of certain phospholipids (sphingolipid and lysolipid substrates), forming an alcohol (often choline) and a cyclic phosphate (By similarity). This toxin acts on sphingomyelin (SM) (By similarity). It may also act on ceramide phosphoethanolamine (CPE), lysophosphatidylcholine (LPC) and lysophosphatidylethanolamine (LPE), but not on lysophosphatidylserine (LPS), and lysophosphatidylglycerol (LPG) (By similarity). It acts by transphosphatidylation, releasing exclusively cyclic phosphate products as second products (By similarity). Induces dermonecrosis, hemolysis, increased vascular permeability, edema, inflammatory response, and platelet aggregation (By similarity).</text>
</comment>
<comment type="catalytic activity">
    <reaction evidence="1">
        <text>an N-(acyl)-sphingosylphosphocholine = an N-(acyl)-sphingosyl-1,3-cyclic phosphate + choline</text>
        <dbReference type="Rhea" id="RHEA:60652"/>
        <dbReference type="ChEBI" id="CHEBI:15354"/>
        <dbReference type="ChEBI" id="CHEBI:64583"/>
        <dbReference type="ChEBI" id="CHEBI:143892"/>
    </reaction>
</comment>
<comment type="catalytic activity">
    <reaction evidence="1">
        <text>an N-(acyl)-sphingosylphosphoethanolamine = an N-(acyl)-sphingosyl-1,3-cyclic phosphate + ethanolamine</text>
        <dbReference type="Rhea" id="RHEA:60648"/>
        <dbReference type="ChEBI" id="CHEBI:57603"/>
        <dbReference type="ChEBI" id="CHEBI:143891"/>
        <dbReference type="ChEBI" id="CHEBI:143892"/>
    </reaction>
</comment>
<comment type="catalytic activity">
    <reaction evidence="1">
        <text>a 1-acyl-sn-glycero-3-phosphocholine = a 1-acyl-sn-glycero-2,3-cyclic phosphate + choline</text>
        <dbReference type="Rhea" id="RHEA:60700"/>
        <dbReference type="ChEBI" id="CHEBI:15354"/>
        <dbReference type="ChEBI" id="CHEBI:58168"/>
        <dbReference type="ChEBI" id="CHEBI:143947"/>
    </reaction>
</comment>
<comment type="catalytic activity">
    <reaction evidence="1">
        <text>a 1-acyl-sn-glycero-3-phosphoethanolamine = a 1-acyl-sn-glycero-2,3-cyclic phosphate + ethanolamine</text>
        <dbReference type="Rhea" id="RHEA:60704"/>
        <dbReference type="ChEBI" id="CHEBI:57603"/>
        <dbReference type="ChEBI" id="CHEBI:64381"/>
        <dbReference type="ChEBI" id="CHEBI:143947"/>
    </reaction>
</comment>
<comment type="cofactor">
    <cofactor evidence="5">
        <name>Mg(2+)</name>
        <dbReference type="ChEBI" id="CHEBI:18420"/>
    </cofactor>
    <text evidence="5">Binds 1 Mg(2+) ion per subunit.</text>
</comment>
<comment type="subcellular location">
    <subcellularLocation>
        <location evidence="8">Secreted</location>
    </subcellularLocation>
</comment>
<comment type="tissue specificity">
    <text evidence="8">Expressed by the venom gland.</text>
</comment>
<comment type="similarity">
    <text evidence="7">Belongs to the arthropod phospholipase D family. Class II subfamily.</text>
</comment>
<comment type="caution">
    <text evidence="1 2 4">The most common activity assay for dermonecrotic toxins detects enzymatic activity by monitoring choline release from substrate. Liberation of choline from sphingomyelin (SM) or lysophosphatidylcholine (LPC) is commonly assumed to result from substrate hydrolysis, giving either ceramide-1-phosphate (C1P) or lysophosphatidic acid (LPA), respectively, as a second product. However, two studies from Lajoie and colleagues (2013 and 2015) report the observation of exclusive formation of cyclic phosphate products as second products, resulting from intramolecular transphosphatidylation. Cyclic phosphates have vastly different biological properties from their monoester counterparts, and they may be relevant to the pathology of brown spider envenomation.</text>
</comment>
<accession>C0JB78</accession>
<evidence type="ECO:0000250" key="1">
    <source>
        <dbReference type="UniProtKB" id="A0A0D4WTV1"/>
    </source>
</evidence>
<evidence type="ECO:0000250" key="2">
    <source>
        <dbReference type="UniProtKB" id="A0A0D4WV12"/>
    </source>
</evidence>
<evidence type="ECO:0000250" key="3">
    <source>
        <dbReference type="UniProtKB" id="P0CE80"/>
    </source>
</evidence>
<evidence type="ECO:0000250" key="4">
    <source>
        <dbReference type="UniProtKB" id="Q4ZFU2"/>
    </source>
</evidence>
<evidence type="ECO:0000250" key="5">
    <source>
        <dbReference type="UniProtKB" id="Q8I914"/>
    </source>
</evidence>
<evidence type="ECO:0000303" key="6">
    <source>
    </source>
</evidence>
<evidence type="ECO:0000305" key="7"/>
<evidence type="ECO:0000305" key="8">
    <source>
    </source>
</evidence>
<organism>
    <name type="scientific">Sicarius cf. damarensis (strain GJB-2008)</name>
    <name type="common">Six-eyed sand spider</name>
    <dbReference type="NCBI Taxonomy" id="575956"/>
    <lineage>
        <taxon>Eukaryota</taxon>
        <taxon>Metazoa</taxon>
        <taxon>Ecdysozoa</taxon>
        <taxon>Arthropoda</taxon>
        <taxon>Chelicerata</taxon>
        <taxon>Arachnida</taxon>
        <taxon>Araneae</taxon>
        <taxon>Araneomorphae</taxon>
        <taxon>Haplogynae</taxon>
        <taxon>Scytodoidea</taxon>
        <taxon>Sicariidae</taxon>
        <taxon>Sicarius</taxon>
    </lineage>
</organism>
<sequence length="273" mass="31558">IMGHMVNAIEQVDEFLNLGANAIEFDIDFDKDGIAQITHHGIPCDCGRKCTKKAIFTEYLDNIRQVTTPDDPKFREQLVLLALDLKLQRISSAKAYRAGEDVAKKLLDHYWRRGNSKARAYILLNIPLVEDYEFIRAFKDTLKNEGYESYNDKVGINFTGNEDLDKIRDVLEILGIHKQVWQADGITSCFARGTERLKEALKKRDTPGYNYIDKVYAWTLVRKSIMRRSLRLGVDGVMSNNPDRVIKVLKEKEFADKFRLATYNDNPWEKFRG</sequence>
<reference key="1">
    <citation type="journal article" date="2009" name="Mol. Biol. Evol.">
        <title>Molecular evolution, functional variation, and proposed nomenclature of the gene family that includes sphingomyelinase D in sicariid spider venoms.</title>
        <authorList>
            <person name="Binford G.J."/>
            <person name="Bodner M.R."/>
            <person name="Cordes M.H."/>
            <person name="Baldwin K.L."/>
            <person name="Rynerson M.R."/>
            <person name="Burns S.N."/>
            <person name="Zobel-Thropp P.A."/>
        </authorList>
    </citation>
    <scope>NUCLEOTIDE SEQUENCE [MRNA]</scope>
    <scope>NOMENCLATURE</scope>
    <source>
        <tissue>Venom gland</tissue>
    </source>
</reference>
<dbReference type="EC" id="4.6.1.-" evidence="4"/>
<dbReference type="EMBL" id="FJ171513">
    <property type="protein sequence ID" value="ACN49009.1"/>
    <property type="molecule type" value="mRNA"/>
</dbReference>
<dbReference type="SMR" id="C0JB78"/>
<dbReference type="GO" id="GO:0005576">
    <property type="term" value="C:extracellular region"/>
    <property type="evidence" value="ECO:0007669"/>
    <property type="project" value="UniProtKB-SubCell"/>
</dbReference>
<dbReference type="GO" id="GO:0016829">
    <property type="term" value="F:lyase activity"/>
    <property type="evidence" value="ECO:0007669"/>
    <property type="project" value="UniProtKB-KW"/>
</dbReference>
<dbReference type="GO" id="GO:0046872">
    <property type="term" value="F:metal ion binding"/>
    <property type="evidence" value="ECO:0007669"/>
    <property type="project" value="UniProtKB-KW"/>
</dbReference>
<dbReference type="GO" id="GO:0008081">
    <property type="term" value="F:phosphoric diester hydrolase activity"/>
    <property type="evidence" value="ECO:0007669"/>
    <property type="project" value="InterPro"/>
</dbReference>
<dbReference type="GO" id="GO:0090729">
    <property type="term" value="F:toxin activity"/>
    <property type="evidence" value="ECO:0007669"/>
    <property type="project" value="UniProtKB-KW"/>
</dbReference>
<dbReference type="GO" id="GO:0031640">
    <property type="term" value="P:killing of cells of another organism"/>
    <property type="evidence" value="ECO:0007669"/>
    <property type="project" value="UniProtKB-KW"/>
</dbReference>
<dbReference type="GO" id="GO:0016042">
    <property type="term" value="P:lipid catabolic process"/>
    <property type="evidence" value="ECO:0007669"/>
    <property type="project" value="UniProtKB-KW"/>
</dbReference>
<dbReference type="CDD" id="cd08576">
    <property type="entry name" value="GDPD_like_SMaseD_PLD"/>
    <property type="match status" value="1"/>
</dbReference>
<dbReference type="Gene3D" id="3.20.20.190">
    <property type="entry name" value="Phosphatidylinositol (PI) phosphodiesterase"/>
    <property type="match status" value="1"/>
</dbReference>
<dbReference type="InterPro" id="IPR017946">
    <property type="entry name" value="PLC-like_Pdiesterase_TIM-brl"/>
</dbReference>
<dbReference type="SUPFAM" id="SSF51695">
    <property type="entry name" value="PLC-like phosphodiesterases"/>
    <property type="match status" value="1"/>
</dbReference>
<keyword id="KW-0204">Cytolysis</keyword>
<keyword id="KW-1061">Dermonecrotic toxin</keyword>
<keyword id="KW-1015">Disulfide bond</keyword>
<keyword id="KW-0354">Hemolysis</keyword>
<keyword id="KW-0442">Lipid degradation</keyword>
<keyword id="KW-0443">Lipid metabolism</keyword>
<keyword id="KW-0456">Lyase</keyword>
<keyword id="KW-0460">Magnesium</keyword>
<keyword id="KW-0479">Metal-binding</keyword>
<keyword id="KW-0964">Secreted</keyword>
<keyword id="KW-0800">Toxin</keyword>
<feature type="chain" id="PRO_0000392884" description="Dermonecrotic toxin SdSicTox-betaIIB1aiii">
    <location>
        <begin position="1" status="less than"/>
        <end position="273"/>
    </location>
</feature>
<feature type="active site" evidence="5">
    <location>
        <position position="4"/>
    </location>
</feature>
<feature type="active site" description="Nucleophile" evidence="5">
    <location>
        <position position="40"/>
    </location>
</feature>
<feature type="binding site" evidence="5">
    <location>
        <position position="24"/>
    </location>
    <ligand>
        <name>Mg(2+)</name>
        <dbReference type="ChEBI" id="CHEBI:18420"/>
    </ligand>
</feature>
<feature type="binding site" evidence="5">
    <location>
        <position position="26"/>
    </location>
    <ligand>
        <name>Mg(2+)</name>
        <dbReference type="ChEBI" id="CHEBI:18420"/>
    </ligand>
</feature>
<feature type="binding site" evidence="5">
    <location>
        <position position="84"/>
    </location>
    <ligand>
        <name>Mg(2+)</name>
        <dbReference type="ChEBI" id="CHEBI:18420"/>
    </ligand>
</feature>
<feature type="disulfide bond" evidence="3">
    <location>
        <begin position="44"/>
        <end position="50"/>
    </location>
</feature>
<feature type="disulfide bond" evidence="3">
    <location>
        <begin position="46"/>
        <end position="189"/>
    </location>
</feature>
<feature type="non-terminal residue">
    <location>
        <position position="1"/>
    </location>
</feature>
<proteinExistence type="evidence at transcript level"/>